<accession>Q9BH81</accession>
<keyword id="KW-0027">Amidation</keyword>
<keyword id="KW-1015">Disulfide bond</keyword>
<keyword id="KW-0528">Neurotoxin</keyword>
<keyword id="KW-0964">Secreted</keyword>
<keyword id="KW-0732">Signal</keyword>
<keyword id="KW-0800">Toxin</keyword>
<sequence>MLCLPVFIILLLLASPAASNPLEKRIQSDLIRAALEDADTKNDPRLLGLVTGACCAVLKFSFCCGKK</sequence>
<feature type="signal peptide" evidence="2">
    <location>
        <begin position="1"/>
        <end position="19"/>
    </location>
</feature>
<feature type="propeptide" id="PRO_0000404942" evidence="1">
    <location>
        <begin position="20"/>
        <end position="45"/>
    </location>
</feature>
<feature type="peptide" id="PRO_0000404943" description="Conotoxin ArMLCL-012">
    <location>
        <begin position="46"/>
        <end position="64"/>
    </location>
</feature>
<feature type="modified residue" description="Cysteine amide" evidence="1">
    <location>
        <position position="64"/>
    </location>
</feature>
<organism>
    <name type="scientific">Conus arenatus</name>
    <name type="common">Sand-dusted cone</name>
    <dbReference type="NCBI Taxonomy" id="89451"/>
    <lineage>
        <taxon>Eukaryota</taxon>
        <taxon>Metazoa</taxon>
        <taxon>Spiralia</taxon>
        <taxon>Lophotrochozoa</taxon>
        <taxon>Mollusca</taxon>
        <taxon>Gastropoda</taxon>
        <taxon>Caenogastropoda</taxon>
        <taxon>Neogastropoda</taxon>
        <taxon>Conoidea</taxon>
        <taxon>Conidae</taxon>
        <taxon>Conus</taxon>
    </lineage>
</organism>
<reference key="1">
    <citation type="journal article" date="2001" name="Mol. Biol. Evol.">
        <title>Mechanisms for evolving hypervariability: the case of conopeptides.</title>
        <authorList>
            <person name="Conticello S.G."/>
            <person name="Gilad Y."/>
            <person name="Avidan N."/>
            <person name="Ben-Asher E."/>
            <person name="Levy Z."/>
            <person name="Fainzilber M."/>
        </authorList>
    </citation>
    <scope>NUCLEOTIDE SEQUENCE [MRNA]</scope>
    <source>
        <tissue>Venom duct</tissue>
    </source>
</reference>
<protein>
    <recommendedName>
        <fullName evidence="6">Conotoxin ArMLCL-012</fullName>
    </recommendedName>
    <alternativeName>
        <fullName evidence="5">Conotoxin ArMLCL-D023</fullName>
    </alternativeName>
</protein>
<proteinExistence type="inferred from homology"/>
<name>CT52_CONAE</name>
<dbReference type="EMBL" id="AF214991">
    <property type="protein sequence ID" value="AAG60419.1"/>
    <property type="molecule type" value="mRNA"/>
</dbReference>
<dbReference type="EMBL" id="AF215103">
    <property type="protein sequence ID" value="AAG60524.1"/>
    <property type="molecule type" value="mRNA"/>
</dbReference>
<dbReference type="ConoServer" id="678">
    <property type="toxin name" value="Ar5.2 precursor"/>
</dbReference>
<dbReference type="GO" id="GO:0005576">
    <property type="term" value="C:extracellular region"/>
    <property type="evidence" value="ECO:0007669"/>
    <property type="project" value="UniProtKB-SubCell"/>
</dbReference>
<dbReference type="GO" id="GO:0090729">
    <property type="term" value="F:toxin activity"/>
    <property type="evidence" value="ECO:0007669"/>
    <property type="project" value="UniProtKB-KW"/>
</dbReference>
<dbReference type="InterPro" id="IPR031565">
    <property type="entry name" value="T-conotoxin"/>
</dbReference>
<dbReference type="Pfam" id="PF16981">
    <property type="entry name" value="Chi-conotoxin"/>
    <property type="match status" value="1"/>
</dbReference>
<evidence type="ECO:0000250" key="1"/>
<evidence type="ECO:0000255" key="2"/>
<evidence type="ECO:0000305" key="3"/>
<evidence type="ECO:0000305" key="4">
    <source>
    </source>
</evidence>
<evidence type="ECO:0000312" key="5">
    <source>
        <dbReference type="EMBL" id="AAG60419.1"/>
    </source>
</evidence>
<evidence type="ECO:0000312" key="6">
    <source>
        <dbReference type="EMBL" id="AAG60524.1"/>
    </source>
</evidence>
<comment type="subcellular location">
    <subcellularLocation>
        <location evidence="4">Secreted</location>
    </subcellularLocation>
</comment>
<comment type="tissue specificity">
    <text evidence="4">Expressed by the venom duct.</text>
</comment>
<comment type="domain">
    <text evidence="3">The cysteine framework is V (CC-CC).</text>
</comment>
<comment type="PTM">
    <text evidence="3">Contains 2 disulfide bonds that can be either 'C1-C3, C2-C4' or 'C1-C4, C2-C3', since these disulfide connectivities have been observed for conotoxins with cysteine framework V (for examples, see AC P0DQQ7 and AC P81755).</text>
</comment>
<comment type="similarity">
    <text evidence="3">Belongs to the conotoxin T superfamily.</text>
</comment>